<proteinExistence type="inferred from homology"/>
<protein>
    <recommendedName>
        <fullName evidence="1">Probable dual-specificity RNA methyltransferase RlmN</fullName>
        <ecNumber evidence="1">2.1.1.192</ecNumber>
    </recommendedName>
    <alternativeName>
        <fullName evidence="1">23S rRNA (adenine(2503)-C(2))-methyltransferase</fullName>
    </alternativeName>
    <alternativeName>
        <fullName evidence="1">23S rRNA m2A2503 methyltransferase</fullName>
    </alternativeName>
    <alternativeName>
        <fullName evidence="1">Ribosomal RNA large subunit methyltransferase N</fullName>
    </alternativeName>
    <alternativeName>
        <fullName evidence="1">tRNA (adenine(37)-C(2))-methyltransferase</fullName>
    </alternativeName>
    <alternativeName>
        <fullName evidence="1">tRNA m2A37 methyltransferase</fullName>
    </alternativeName>
</protein>
<comment type="function">
    <text evidence="1">Specifically methylates position 2 of adenine 2503 in 23S rRNA and position 2 of adenine 37 in tRNAs.</text>
</comment>
<comment type="catalytic activity">
    <reaction evidence="1">
        <text>adenosine(2503) in 23S rRNA + 2 reduced [2Fe-2S]-[ferredoxin] + 2 S-adenosyl-L-methionine = 2-methyladenosine(2503) in 23S rRNA + 5'-deoxyadenosine + L-methionine + 2 oxidized [2Fe-2S]-[ferredoxin] + S-adenosyl-L-homocysteine</text>
        <dbReference type="Rhea" id="RHEA:42916"/>
        <dbReference type="Rhea" id="RHEA-COMP:10000"/>
        <dbReference type="Rhea" id="RHEA-COMP:10001"/>
        <dbReference type="Rhea" id="RHEA-COMP:10152"/>
        <dbReference type="Rhea" id="RHEA-COMP:10282"/>
        <dbReference type="ChEBI" id="CHEBI:17319"/>
        <dbReference type="ChEBI" id="CHEBI:33737"/>
        <dbReference type="ChEBI" id="CHEBI:33738"/>
        <dbReference type="ChEBI" id="CHEBI:57844"/>
        <dbReference type="ChEBI" id="CHEBI:57856"/>
        <dbReference type="ChEBI" id="CHEBI:59789"/>
        <dbReference type="ChEBI" id="CHEBI:74411"/>
        <dbReference type="ChEBI" id="CHEBI:74497"/>
        <dbReference type="EC" id="2.1.1.192"/>
    </reaction>
</comment>
<comment type="catalytic activity">
    <reaction evidence="1">
        <text>adenosine(37) in tRNA + 2 reduced [2Fe-2S]-[ferredoxin] + 2 S-adenosyl-L-methionine = 2-methyladenosine(37) in tRNA + 5'-deoxyadenosine + L-methionine + 2 oxidized [2Fe-2S]-[ferredoxin] + S-adenosyl-L-homocysteine</text>
        <dbReference type="Rhea" id="RHEA:43332"/>
        <dbReference type="Rhea" id="RHEA-COMP:10000"/>
        <dbReference type="Rhea" id="RHEA-COMP:10001"/>
        <dbReference type="Rhea" id="RHEA-COMP:10162"/>
        <dbReference type="Rhea" id="RHEA-COMP:10485"/>
        <dbReference type="ChEBI" id="CHEBI:17319"/>
        <dbReference type="ChEBI" id="CHEBI:33737"/>
        <dbReference type="ChEBI" id="CHEBI:33738"/>
        <dbReference type="ChEBI" id="CHEBI:57844"/>
        <dbReference type="ChEBI" id="CHEBI:57856"/>
        <dbReference type="ChEBI" id="CHEBI:59789"/>
        <dbReference type="ChEBI" id="CHEBI:74411"/>
        <dbReference type="ChEBI" id="CHEBI:74497"/>
        <dbReference type="EC" id="2.1.1.192"/>
    </reaction>
</comment>
<comment type="cofactor">
    <cofactor evidence="1">
        <name>[4Fe-4S] cluster</name>
        <dbReference type="ChEBI" id="CHEBI:49883"/>
    </cofactor>
    <text evidence="1">Binds 1 [4Fe-4S] cluster. The cluster is coordinated with 3 cysteines and an exchangeable S-adenosyl-L-methionine.</text>
</comment>
<comment type="subcellular location">
    <subcellularLocation>
        <location evidence="1">Cytoplasm</location>
    </subcellularLocation>
</comment>
<comment type="miscellaneous">
    <text evidence="1">Reaction proceeds by a ping-pong mechanism involving intermediate methylation of a conserved cysteine residue.</text>
</comment>
<comment type="similarity">
    <text evidence="1">Belongs to the radical SAM superfamily. RlmN family.</text>
</comment>
<accession>Q2RK16</accession>
<keyword id="KW-0004">4Fe-4S</keyword>
<keyword id="KW-0963">Cytoplasm</keyword>
<keyword id="KW-1015">Disulfide bond</keyword>
<keyword id="KW-0408">Iron</keyword>
<keyword id="KW-0411">Iron-sulfur</keyword>
<keyword id="KW-0479">Metal-binding</keyword>
<keyword id="KW-0489">Methyltransferase</keyword>
<keyword id="KW-0698">rRNA processing</keyword>
<keyword id="KW-0949">S-adenosyl-L-methionine</keyword>
<keyword id="KW-0808">Transferase</keyword>
<keyword id="KW-0819">tRNA processing</keyword>
<feature type="chain" id="PRO_0000350259" description="Probable dual-specificity RNA methyltransferase RlmN">
    <location>
        <begin position="1"/>
        <end position="354"/>
    </location>
</feature>
<feature type="domain" description="Radical SAM core" evidence="2">
    <location>
        <begin position="103"/>
        <end position="332"/>
    </location>
</feature>
<feature type="active site" description="Proton acceptor" evidence="1">
    <location>
        <position position="94"/>
    </location>
</feature>
<feature type="active site" description="S-methylcysteine intermediate" evidence="1">
    <location>
        <position position="343"/>
    </location>
</feature>
<feature type="binding site" evidence="1">
    <location>
        <position position="117"/>
    </location>
    <ligand>
        <name>[4Fe-4S] cluster</name>
        <dbReference type="ChEBI" id="CHEBI:49883"/>
        <note>4Fe-4S-S-AdoMet</note>
    </ligand>
</feature>
<feature type="binding site" evidence="1">
    <location>
        <position position="121"/>
    </location>
    <ligand>
        <name>[4Fe-4S] cluster</name>
        <dbReference type="ChEBI" id="CHEBI:49883"/>
        <note>4Fe-4S-S-AdoMet</note>
    </ligand>
</feature>
<feature type="binding site" evidence="1">
    <location>
        <position position="124"/>
    </location>
    <ligand>
        <name>[4Fe-4S] cluster</name>
        <dbReference type="ChEBI" id="CHEBI:49883"/>
        <note>4Fe-4S-S-AdoMet</note>
    </ligand>
</feature>
<feature type="binding site" evidence="1">
    <location>
        <begin position="169"/>
        <end position="170"/>
    </location>
    <ligand>
        <name>S-adenosyl-L-methionine</name>
        <dbReference type="ChEBI" id="CHEBI:59789"/>
    </ligand>
</feature>
<feature type="binding site" evidence="1">
    <location>
        <position position="201"/>
    </location>
    <ligand>
        <name>S-adenosyl-L-methionine</name>
        <dbReference type="ChEBI" id="CHEBI:59789"/>
    </ligand>
</feature>
<feature type="binding site" evidence="1">
    <location>
        <begin position="224"/>
        <end position="226"/>
    </location>
    <ligand>
        <name>S-adenosyl-L-methionine</name>
        <dbReference type="ChEBI" id="CHEBI:59789"/>
    </ligand>
</feature>
<feature type="binding site" evidence="1">
    <location>
        <position position="300"/>
    </location>
    <ligand>
        <name>S-adenosyl-L-methionine</name>
        <dbReference type="ChEBI" id="CHEBI:59789"/>
    </ligand>
</feature>
<feature type="disulfide bond" description="(transient)" evidence="1">
    <location>
        <begin position="110"/>
        <end position="343"/>
    </location>
</feature>
<organism>
    <name type="scientific">Moorella thermoacetica (strain ATCC 39073 / JCM 9320)</name>
    <dbReference type="NCBI Taxonomy" id="264732"/>
    <lineage>
        <taxon>Bacteria</taxon>
        <taxon>Bacillati</taxon>
        <taxon>Bacillota</taxon>
        <taxon>Clostridia</taxon>
        <taxon>Moorellales</taxon>
        <taxon>Moorellaceae</taxon>
        <taxon>Moorella</taxon>
    </lineage>
</organism>
<gene>
    <name evidence="1" type="primary">rlmN</name>
    <name type="ordered locus">Moth_0906</name>
</gene>
<dbReference type="EC" id="2.1.1.192" evidence="1"/>
<dbReference type="EMBL" id="CP000232">
    <property type="protein sequence ID" value="ABC19223.1"/>
    <property type="molecule type" value="Genomic_DNA"/>
</dbReference>
<dbReference type="RefSeq" id="YP_429766.1">
    <property type="nucleotide sequence ID" value="NC_007644.1"/>
</dbReference>
<dbReference type="SMR" id="Q2RK16"/>
<dbReference type="STRING" id="264732.Moth_0906"/>
<dbReference type="EnsemblBacteria" id="ABC19223">
    <property type="protein sequence ID" value="ABC19223"/>
    <property type="gene ID" value="Moth_0906"/>
</dbReference>
<dbReference type="KEGG" id="mta:Moth_0906"/>
<dbReference type="PATRIC" id="fig|264732.11.peg.974"/>
<dbReference type="eggNOG" id="COG0820">
    <property type="taxonomic scope" value="Bacteria"/>
</dbReference>
<dbReference type="HOGENOM" id="CLU_029101_2_0_9"/>
<dbReference type="OrthoDB" id="9793973at2"/>
<dbReference type="GO" id="GO:0005737">
    <property type="term" value="C:cytoplasm"/>
    <property type="evidence" value="ECO:0007669"/>
    <property type="project" value="UniProtKB-SubCell"/>
</dbReference>
<dbReference type="GO" id="GO:0051539">
    <property type="term" value="F:4 iron, 4 sulfur cluster binding"/>
    <property type="evidence" value="ECO:0007669"/>
    <property type="project" value="UniProtKB-UniRule"/>
</dbReference>
<dbReference type="GO" id="GO:0046872">
    <property type="term" value="F:metal ion binding"/>
    <property type="evidence" value="ECO:0007669"/>
    <property type="project" value="UniProtKB-KW"/>
</dbReference>
<dbReference type="GO" id="GO:0070040">
    <property type="term" value="F:rRNA (adenine(2503)-C2-)-methyltransferase activity"/>
    <property type="evidence" value="ECO:0007669"/>
    <property type="project" value="UniProtKB-UniRule"/>
</dbReference>
<dbReference type="GO" id="GO:0019843">
    <property type="term" value="F:rRNA binding"/>
    <property type="evidence" value="ECO:0007669"/>
    <property type="project" value="UniProtKB-UniRule"/>
</dbReference>
<dbReference type="GO" id="GO:0002935">
    <property type="term" value="F:tRNA (adenine(37)-C2)-methyltransferase activity"/>
    <property type="evidence" value="ECO:0007669"/>
    <property type="project" value="UniProtKB-UniRule"/>
</dbReference>
<dbReference type="GO" id="GO:0000049">
    <property type="term" value="F:tRNA binding"/>
    <property type="evidence" value="ECO:0007669"/>
    <property type="project" value="UniProtKB-UniRule"/>
</dbReference>
<dbReference type="GO" id="GO:0070475">
    <property type="term" value="P:rRNA base methylation"/>
    <property type="evidence" value="ECO:0007669"/>
    <property type="project" value="UniProtKB-UniRule"/>
</dbReference>
<dbReference type="GO" id="GO:0030488">
    <property type="term" value="P:tRNA methylation"/>
    <property type="evidence" value="ECO:0007669"/>
    <property type="project" value="UniProtKB-UniRule"/>
</dbReference>
<dbReference type="CDD" id="cd01335">
    <property type="entry name" value="Radical_SAM"/>
    <property type="match status" value="1"/>
</dbReference>
<dbReference type="FunFam" id="3.20.20.70:FF:000014">
    <property type="entry name" value="Probable dual-specificity RNA methyltransferase RlmN"/>
    <property type="match status" value="1"/>
</dbReference>
<dbReference type="Gene3D" id="1.10.150.530">
    <property type="match status" value="1"/>
</dbReference>
<dbReference type="Gene3D" id="3.20.20.70">
    <property type="entry name" value="Aldolase class I"/>
    <property type="match status" value="1"/>
</dbReference>
<dbReference type="HAMAP" id="MF_01849">
    <property type="entry name" value="RNA_methyltr_RlmN"/>
    <property type="match status" value="1"/>
</dbReference>
<dbReference type="InterPro" id="IPR013785">
    <property type="entry name" value="Aldolase_TIM"/>
</dbReference>
<dbReference type="InterPro" id="IPR040072">
    <property type="entry name" value="Methyltransferase_A"/>
</dbReference>
<dbReference type="InterPro" id="IPR048641">
    <property type="entry name" value="RlmN_N"/>
</dbReference>
<dbReference type="InterPro" id="IPR027492">
    <property type="entry name" value="RNA_MTrfase_RlmN"/>
</dbReference>
<dbReference type="InterPro" id="IPR004383">
    <property type="entry name" value="rRNA_lsu_MTrfase_RlmN/Cfr"/>
</dbReference>
<dbReference type="InterPro" id="IPR007197">
    <property type="entry name" value="rSAM"/>
</dbReference>
<dbReference type="NCBIfam" id="TIGR00048">
    <property type="entry name" value="rRNA_mod_RlmN"/>
    <property type="match status" value="1"/>
</dbReference>
<dbReference type="PANTHER" id="PTHR30544">
    <property type="entry name" value="23S RRNA METHYLTRANSFERASE"/>
    <property type="match status" value="1"/>
</dbReference>
<dbReference type="PANTHER" id="PTHR30544:SF5">
    <property type="entry name" value="RADICAL SAM CORE DOMAIN-CONTAINING PROTEIN"/>
    <property type="match status" value="1"/>
</dbReference>
<dbReference type="Pfam" id="PF04055">
    <property type="entry name" value="Radical_SAM"/>
    <property type="match status" value="1"/>
</dbReference>
<dbReference type="Pfam" id="PF21016">
    <property type="entry name" value="RlmN_N"/>
    <property type="match status" value="1"/>
</dbReference>
<dbReference type="PIRSF" id="PIRSF006004">
    <property type="entry name" value="CHP00048"/>
    <property type="match status" value="1"/>
</dbReference>
<dbReference type="SFLD" id="SFLDF00275">
    <property type="entry name" value="adenosine_C2_methyltransferase"/>
    <property type="match status" value="1"/>
</dbReference>
<dbReference type="SFLD" id="SFLDG01062">
    <property type="entry name" value="methyltransferase_(Class_A)"/>
    <property type="match status" value="1"/>
</dbReference>
<dbReference type="SUPFAM" id="SSF102114">
    <property type="entry name" value="Radical SAM enzymes"/>
    <property type="match status" value="1"/>
</dbReference>
<dbReference type="PROSITE" id="PS51918">
    <property type="entry name" value="RADICAL_SAM"/>
    <property type="match status" value="1"/>
</dbReference>
<reference key="1">
    <citation type="journal article" date="2008" name="Environ. Microbiol.">
        <title>The complete genome sequence of Moorella thermoacetica (f. Clostridium thermoaceticum).</title>
        <authorList>
            <person name="Pierce E."/>
            <person name="Xie G."/>
            <person name="Barabote R.D."/>
            <person name="Saunders E."/>
            <person name="Han C.S."/>
            <person name="Detter J.C."/>
            <person name="Richardson P."/>
            <person name="Brettin T.S."/>
            <person name="Das A."/>
            <person name="Ljungdahl L.G."/>
            <person name="Ragsdale S.W."/>
        </authorList>
    </citation>
    <scope>NUCLEOTIDE SEQUENCE [LARGE SCALE GENOMIC DNA]</scope>
    <source>
        <strain>ATCC 39073 / JCM 9320</strain>
    </source>
</reference>
<evidence type="ECO:0000255" key="1">
    <source>
        <dbReference type="HAMAP-Rule" id="MF_01849"/>
    </source>
</evidence>
<evidence type="ECO:0000255" key="2">
    <source>
        <dbReference type="PROSITE-ProRule" id="PRU01266"/>
    </source>
</evidence>
<sequence>MTTRIDLRGLLPQELEELAVRLGEAPYRGRQIFRWLHARRAKGIEVMSDLPRAFRERLALVAELPPVRVLNRLVAADGLTRKLLLGLGDGNSIECVLMIYKDGRRRNTACLSSQVGCAMGCSFCATGQGGLQRNLTASEIILQALALGAELAEGEGGNRISNIVFMGMGEPLNNYEAVMKGVRIFEDPSGWGISHRRITLSTCGIVPGIERLAREKPPLELAVSLHAVTNELRDKLMPINRRYPLEELIPACRRYAEITGRRVTFEYALIAGVNDRREDARGLSRLLRDMLAFVNIIPLNPVAGSGFKGVPPAAARAFVALLQEAGLEAAIRDSRGQDIAAACGQLRFASREVL</sequence>
<name>RLMN_MOOTA</name>